<dbReference type="EC" id="1.2.1.12" evidence="7"/>
<dbReference type="EMBL" id="X02662">
    <property type="protein sequence ID" value="CAA26498.1"/>
    <property type="molecule type" value="Genomic_DNA"/>
</dbReference>
<dbReference type="EMBL" id="U00096">
    <property type="protein sequence ID" value="AAC74849.1"/>
    <property type="molecule type" value="Genomic_DNA"/>
</dbReference>
<dbReference type="EMBL" id="AP009048">
    <property type="protein sequence ID" value="BAA15576.1"/>
    <property type="molecule type" value="Genomic_DNA"/>
</dbReference>
<dbReference type="EMBL" id="M66870">
    <property type="protein sequence ID" value="AAA23838.1"/>
    <property type="molecule type" value="Genomic_DNA"/>
</dbReference>
<dbReference type="EMBL" id="M66871">
    <property type="protein sequence ID" value="AAA23839.1"/>
    <property type="molecule type" value="Genomic_DNA"/>
</dbReference>
<dbReference type="EMBL" id="M66872">
    <property type="protein sequence ID" value="AAA02930.1"/>
    <property type="molecule type" value="Genomic_DNA"/>
</dbReference>
<dbReference type="EMBL" id="M66873">
    <property type="protein sequence ID" value="AAA23840.1"/>
    <property type="molecule type" value="Genomic_DNA"/>
</dbReference>
<dbReference type="EMBL" id="M66874">
    <property type="protein sequence ID" value="AAA23841.1"/>
    <property type="molecule type" value="Genomic_DNA"/>
</dbReference>
<dbReference type="EMBL" id="M66875">
    <property type="protein sequence ID" value="AAA23842.1"/>
    <property type="molecule type" value="Genomic_DNA"/>
</dbReference>
<dbReference type="EMBL" id="M66876">
    <property type="protein sequence ID" value="AAA23843.1"/>
    <property type="molecule type" value="Genomic_DNA"/>
</dbReference>
<dbReference type="EMBL" id="M66877">
    <property type="protein sequence ID" value="AAA23844.1"/>
    <property type="molecule type" value="Genomic_DNA"/>
</dbReference>
<dbReference type="EMBL" id="M66878">
    <property type="protein sequence ID" value="AAA23845.1"/>
    <property type="molecule type" value="Genomic_DNA"/>
</dbReference>
<dbReference type="EMBL" id="M66879">
    <property type="protein sequence ID" value="AAA23846.1"/>
    <property type="molecule type" value="Genomic_DNA"/>
</dbReference>
<dbReference type="EMBL" id="M66880">
    <property type="protein sequence ID" value="AAA23847.1"/>
    <property type="molecule type" value="Genomic_DNA"/>
</dbReference>
<dbReference type="EMBL" id="M66881">
    <property type="protein sequence ID" value="AAA23848.1"/>
    <property type="molecule type" value="Genomic_DNA"/>
</dbReference>
<dbReference type="EMBL" id="M66882">
    <property type="protein sequence ID" value="AAA23849.1"/>
    <property type="molecule type" value="Genomic_DNA"/>
</dbReference>
<dbReference type="EMBL" id="U07750">
    <property type="protein sequence ID" value="AAC43271.1"/>
    <property type="molecule type" value="Genomic_DNA"/>
</dbReference>
<dbReference type="EMBL" id="U07751">
    <property type="protein sequence ID" value="AAC43272.1"/>
    <property type="molecule type" value="Genomic_DNA"/>
</dbReference>
<dbReference type="EMBL" id="U07752">
    <property type="protein sequence ID" value="AAC43273.1"/>
    <property type="molecule type" value="Genomic_DNA"/>
</dbReference>
<dbReference type="EMBL" id="U07754">
    <property type="protein sequence ID" value="AAC43274.1"/>
    <property type="molecule type" value="Genomic_DNA"/>
</dbReference>
<dbReference type="EMBL" id="U07765">
    <property type="protein sequence ID" value="AAC43284.1"/>
    <property type="molecule type" value="Genomic_DNA"/>
</dbReference>
<dbReference type="EMBL" id="U07768">
    <property type="protein sequence ID" value="AAC43285.1"/>
    <property type="molecule type" value="Genomic_DNA"/>
</dbReference>
<dbReference type="EMBL" id="U07769">
    <property type="protein sequence ID" value="AAC43286.1"/>
    <property type="molecule type" value="Genomic_DNA"/>
</dbReference>
<dbReference type="EMBL" id="U07770">
    <property type="protein sequence ID" value="AAC43287.1"/>
    <property type="molecule type" value="Genomic_DNA"/>
</dbReference>
<dbReference type="EMBL" id="U07771">
    <property type="protein sequence ID" value="AAC43288.1"/>
    <property type="molecule type" value="Genomic_DNA"/>
</dbReference>
<dbReference type="EMBL" id="U07772">
    <property type="protein sequence ID" value="AAC43289.1"/>
    <property type="molecule type" value="Genomic_DNA"/>
</dbReference>
<dbReference type="EMBL" id="U07773">
    <property type="protein sequence ID" value="AAC43290.1"/>
    <property type="molecule type" value="Genomic_DNA"/>
</dbReference>
<dbReference type="PIR" id="A25209">
    <property type="entry name" value="DEECG3"/>
</dbReference>
<dbReference type="RefSeq" id="NP_416293.1">
    <property type="nucleotide sequence ID" value="NC_000913.3"/>
</dbReference>
<dbReference type="RefSeq" id="WP_000153502.1">
    <property type="nucleotide sequence ID" value="NZ_STEB01000009.1"/>
</dbReference>
<dbReference type="PDB" id="1DC3">
    <property type="method" value="X-ray"/>
    <property type="resolution" value="2.50 A"/>
    <property type="chains" value="A/B=2-331"/>
</dbReference>
<dbReference type="PDB" id="1DC4">
    <property type="method" value="X-ray"/>
    <property type="resolution" value="2.50 A"/>
    <property type="chains" value="A/B=2-331"/>
</dbReference>
<dbReference type="PDB" id="1DC5">
    <property type="method" value="X-ray"/>
    <property type="resolution" value="2.00 A"/>
    <property type="chains" value="A/B=2-331"/>
</dbReference>
<dbReference type="PDB" id="1DC6">
    <property type="method" value="X-ray"/>
    <property type="resolution" value="2.00 A"/>
    <property type="chains" value="A/B=2-331"/>
</dbReference>
<dbReference type="PDB" id="1GAD">
    <property type="method" value="X-ray"/>
    <property type="resolution" value="1.80 A"/>
    <property type="chains" value="O/P=2-331"/>
</dbReference>
<dbReference type="PDB" id="1GAE">
    <property type="method" value="X-ray"/>
    <property type="resolution" value="2.17 A"/>
    <property type="chains" value="O/P=2-331"/>
</dbReference>
<dbReference type="PDB" id="1S7C">
    <property type="method" value="X-ray"/>
    <property type="resolution" value="2.04 A"/>
    <property type="chains" value="A=1-331"/>
</dbReference>
<dbReference type="PDB" id="2VYN">
    <property type="method" value="X-ray"/>
    <property type="resolution" value="2.20 A"/>
    <property type="chains" value="A/B/C=1-331"/>
</dbReference>
<dbReference type="PDB" id="2VYV">
    <property type="method" value="X-ray"/>
    <property type="resolution" value="2.38 A"/>
    <property type="chains" value="A/B/C=1-331"/>
</dbReference>
<dbReference type="PDB" id="5O0V">
    <property type="method" value="X-ray"/>
    <property type="resolution" value="2.40 A"/>
    <property type="chains" value="A=2-331"/>
</dbReference>
<dbReference type="PDB" id="5ZA0">
    <property type="method" value="X-ray"/>
    <property type="resolution" value="2.00 A"/>
    <property type="chains" value="A=1-331"/>
</dbReference>
<dbReference type="PDB" id="6IO4">
    <property type="method" value="X-ray"/>
    <property type="resolution" value="3.10 A"/>
    <property type="chains" value="A/B/C/D/E/F/G/H/I/J/K/L/M/N/O/P=3-331"/>
</dbReference>
<dbReference type="PDB" id="6IO6">
    <property type="method" value="X-ray"/>
    <property type="resolution" value="2.64 A"/>
    <property type="chains" value="A=3-331"/>
</dbReference>
<dbReference type="PDB" id="6IOJ">
    <property type="method" value="X-ray"/>
    <property type="resolution" value="2.29 A"/>
    <property type="chains" value="A=3-331"/>
</dbReference>
<dbReference type="PDB" id="6UTM">
    <property type="method" value="X-ray"/>
    <property type="resolution" value="2.14 A"/>
    <property type="chains" value="A/B=2-331"/>
</dbReference>
<dbReference type="PDB" id="6UTN">
    <property type="method" value="X-ray"/>
    <property type="resolution" value="1.79 A"/>
    <property type="chains" value="A/B=2-331"/>
</dbReference>
<dbReference type="PDB" id="6UTO">
    <property type="method" value="X-ray"/>
    <property type="resolution" value="1.64 A"/>
    <property type="chains" value="A/B=2-331"/>
</dbReference>
<dbReference type="PDB" id="8JZJ">
    <property type="method" value="X-ray"/>
    <property type="resolution" value="1.99 A"/>
    <property type="chains" value="A=2-331"/>
</dbReference>
<dbReference type="PDBsum" id="1DC3"/>
<dbReference type="PDBsum" id="1DC4"/>
<dbReference type="PDBsum" id="1DC5"/>
<dbReference type="PDBsum" id="1DC6"/>
<dbReference type="PDBsum" id="1GAD"/>
<dbReference type="PDBsum" id="1GAE"/>
<dbReference type="PDBsum" id="1S7C"/>
<dbReference type="PDBsum" id="2VYN"/>
<dbReference type="PDBsum" id="2VYV"/>
<dbReference type="PDBsum" id="5O0V"/>
<dbReference type="PDBsum" id="5ZA0"/>
<dbReference type="PDBsum" id="6IO4"/>
<dbReference type="PDBsum" id="6IO6"/>
<dbReference type="PDBsum" id="6IOJ"/>
<dbReference type="PDBsum" id="6UTM"/>
<dbReference type="PDBsum" id="6UTN"/>
<dbReference type="PDBsum" id="6UTO"/>
<dbReference type="PDBsum" id="8JZJ"/>
<dbReference type="SMR" id="P0A9B2"/>
<dbReference type="BioGRID" id="4260308">
    <property type="interactions" value="68"/>
</dbReference>
<dbReference type="BioGRID" id="851992">
    <property type="interactions" value="2"/>
</dbReference>
<dbReference type="DIP" id="DIP-31848N"/>
<dbReference type="FunCoup" id="P0A9B2">
    <property type="interactions" value="899"/>
</dbReference>
<dbReference type="IntAct" id="P0A9B2">
    <property type="interactions" value="27"/>
</dbReference>
<dbReference type="MINT" id="P0A9B2"/>
<dbReference type="STRING" id="511145.b1779"/>
<dbReference type="DrugBank" id="DB03814">
    <property type="generic name" value="2-(N-morpholino)ethanesulfonic acid"/>
</dbReference>
<dbReference type="DrugBank" id="DB02263">
    <property type="generic name" value="D-glyceraldehyde 3-phosphate"/>
</dbReference>
<dbReference type="iPTMnet" id="P0A9B2"/>
<dbReference type="jPOST" id="P0A9B2"/>
<dbReference type="PaxDb" id="511145-b1779"/>
<dbReference type="EnsemblBacteria" id="AAC74849">
    <property type="protein sequence ID" value="AAC74849"/>
    <property type="gene ID" value="b1779"/>
</dbReference>
<dbReference type="GeneID" id="93775988"/>
<dbReference type="GeneID" id="947679"/>
<dbReference type="KEGG" id="ecj:JW1768"/>
<dbReference type="KEGG" id="eco:b1779"/>
<dbReference type="KEGG" id="ecoc:C3026_10150"/>
<dbReference type="PATRIC" id="fig|1411691.4.peg.475"/>
<dbReference type="EchoBASE" id="EB0362"/>
<dbReference type="eggNOG" id="COG0057">
    <property type="taxonomic scope" value="Bacteria"/>
</dbReference>
<dbReference type="HOGENOM" id="CLU_030140_0_3_6"/>
<dbReference type="InParanoid" id="P0A9B2"/>
<dbReference type="OMA" id="YGYTCNM"/>
<dbReference type="OrthoDB" id="9803304at2"/>
<dbReference type="PhylomeDB" id="P0A9B2"/>
<dbReference type="BioCyc" id="EcoCyc:GAPDH-A-MONOMER"/>
<dbReference type="BioCyc" id="MetaCyc:GAPDH-A-MONOMER"/>
<dbReference type="BRENDA" id="1.2.1.12">
    <property type="organism ID" value="2026"/>
</dbReference>
<dbReference type="SABIO-RK" id="P0A9B2"/>
<dbReference type="UniPathway" id="UPA00109">
    <property type="reaction ID" value="UER00184"/>
</dbReference>
<dbReference type="EvolutionaryTrace" id="P0A9B2"/>
<dbReference type="PRO" id="PR:P0A9B2"/>
<dbReference type="Proteomes" id="UP000000625">
    <property type="component" value="Chromosome"/>
</dbReference>
<dbReference type="GO" id="GO:0005829">
    <property type="term" value="C:cytosol"/>
    <property type="evidence" value="ECO:0000314"/>
    <property type="project" value="EcoCyc"/>
</dbReference>
<dbReference type="GO" id="GO:0016020">
    <property type="term" value="C:membrane"/>
    <property type="evidence" value="ECO:0007005"/>
    <property type="project" value="UniProtKB"/>
</dbReference>
<dbReference type="GO" id="GO:0004365">
    <property type="term" value="F:glyceraldehyde-3-phosphate dehydrogenase (NAD+) (phosphorylating) activity"/>
    <property type="evidence" value="ECO:0000314"/>
    <property type="project" value="UniProtKB"/>
</dbReference>
<dbReference type="GO" id="GO:0042802">
    <property type="term" value="F:identical protein binding"/>
    <property type="evidence" value="ECO:0000353"/>
    <property type="project" value="IntAct"/>
</dbReference>
<dbReference type="GO" id="GO:0051287">
    <property type="term" value="F:NAD binding"/>
    <property type="evidence" value="ECO:0000314"/>
    <property type="project" value="UniProtKB"/>
</dbReference>
<dbReference type="GO" id="GO:0050661">
    <property type="term" value="F:NADP binding"/>
    <property type="evidence" value="ECO:0007669"/>
    <property type="project" value="InterPro"/>
</dbReference>
<dbReference type="GO" id="GO:0006006">
    <property type="term" value="P:glucose metabolic process"/>
    <property type="evidence" value="ECO:0007669"/>
    <property type="project" value="InterPro"/>
</dbReference>
<dbReference type="GO" id="GO:0006096">
    <property type="term" value="P:glycolytic process"/>
    <property type="evidence" value="ECO:0000315"/>
    <property type="project" value="EcoCyc"/>
</dbReference>
<dbReference type="CDD" id="cd18126">
    <property type="entry name" value="GAPDH_I_C"/>
    <property type="match status" value="1"/>
</dbReference>
<dbReference type="CDD" id="cd05214">
    <property type="entry name" value="GAPDH_I_N"/>
    <property type="match status" value="1"/>
</dbReference>
<dbReference type="FunFam" id="3.30.360.10:FF:000001">
    <property type="entry name" value="Glyceraldehyde-3-phosphate dehydrogenase"/>
    <property type="match status" value="1"/>
</dbReference>
<dbReference type="FunFam" id="3.40.50.720:FF:000001">
    <property type="entry name" value="Glyceraldehyde-3-phosphate dehydrogenase"/>
    <property type="match status" value="1"/>
</dbReference>
<dbReference type="Gene3D" id="3.30.360.10">
    <property type="entry name" value="Dihydrodipicolinate Reductase, domain 2"/>
    <property type="match status" value="1"/>
</dbReference>
<dbReference type="Gene3D" id="3.40.50.720">
    <property type="entry name" value="NAD(P)-binding Rossmann-like Domain"/>
    <property type="match status" value="1"/>
</dbReference>
<dbReference type="InterPro" id="IPR020831">
    <property type="entry name" value="GlycerAld/Erythrose_P_DH"/>
</dbReference>
<dbReference type="InterPro" id="IPR020830">
    <property type="entry name" value="GlycerAld_3-P_DH_AS"/>
</dbReference>
<dbReference type="InterPro" id="IPR020829">
    <property type="entry name" value="GlycerAld_3-P_DH_cat"/>
</dbReference>
<dbReference type="InterPro" id="IPR020828">
    <property type="entry name" value="GlycerAld_3-P_DH_NAD(P)-bd"/>
</dbReference>
<dbReference type="InterPro" id="IPR006424">
    <property type="entry name" value="Glyceraldehyde-3-P_DH_1"/>
</dbReference>
<dbReference type="InterPro" id="IPR036291">
    <property type="entry name" value="NAD(P)-bd_dom_sf"/>
</dbReference>
<dbReference type="NCBIfam" id="TIGR01534">
    <property type="entry name" value="GAPDH-I"/>
    <property type="match status" value="1"/>
</dbReference>
<dbReference type="NCBIfam" id="NF011954">
    <property type="entry name" value="PRK15425.1"/>
    <property type="match status" value="1"/>
</dbReference>
<dbReference type="PANTHER" id="PTHR10836">
    <property type="entry name" value="GLYCERALDEHYDE 3-PHOSPHATE DEHYDROGENASE"/>
    <property type="match status" value="1"/>
</dbReference>
<dbReference type="PANTHER" id="PTHR10836:SF76">
    <property type="entry name" value="GLYCERALDEHYDE-3-PHOSPHATE DEHYDROGENASE-RELATED"/>
    <property type="match status" value="1"/>
</dbReference>
<dbReference type="Pfam" id="PF02800">
    <property type="entry name" value="Gp_dh_C"/>
    <property type="match status" value="1"/>
</dbReference>
<dbReference type="Pfam" id="PF00044">
    <property type="entry name" value="Gp_dh_N"/>
    <property type="match status" value="1"/>
</dbReference>
<dbReference type="PIRSF" id="PIRSF000149">
    <property type="entry name" value="GAP_DH"/>
    <property type="match status" value="1"/>
</dbReference>
<dbReference type="PRINTS" id="PR00078">
    <property type="entry name" value="G3PDHDRGNASE"/>
</dbReference>
<dbReference type="SMART" id="SM00846">
    <property type="entry name" value="Gp_dh_N"/>
    <property type="match status" value="1"/>
</dbReference>
<dbReference type="SUPFAM" id="SSF55347">
    <property type="entry name" value="Glyceraldehyde-3-phosphate dehydrogenase-like, C-terminal domain"/>
    <property type="match status" value="1"/>
</dbReference>
<dbReference type="SUPFAM" id="SSF51735">
    <property type="entry name" value="NAD(P)-binding Rossmann-fold domains"/>
    <property type="match status" value="1"/>
</dbReference>
<dbReference type="PROSITE" id="PS00071">
    <property type="entry name" value="GAPDH"/>
    <property type="match status" value="1"/>
</dbReference>
<keyword id="KW-0002">3D-structure</keyword>
<keyword id="KW-0007">Acetylation</keyword>
<keyword id="KW-0963">Cytoplasm</keyword>
<keyword id="KW-0903">Direct protein sequencing</keyword>
<keyword id="KW-0324">Glycolysis</keyword>
<keyword id="KW-0520">NAD</keyword>
<keyword id="KW-0547">Nucleotide-binding</keyword>
<keyword id="KW-0560">Oxidoreductase</keyword>
<keyword id="KW-1185">Reference proteome</keyword>
<comment type="function">
    <text evidence="7">Catalyzes the oxidative phosphorylation of glyceraldehyde 3-phosphate (G3P) to 1,3-bisphosphoglycerate (BPG) using the cofactor NAD. The first reaction step involves the formation of a hemiacetal intermediate between G3P and a cysteine residue, and this hemiacetal intermediate is then oxidized to a thioester, with concomitant reduction of NAD to NADH. The reduced NADH is then exchanged with the second NAD, and the thioester is attacked by a nucleophilic inorganic phosphate to produce BPG.</text>
</comment>
<comment type="catalytic activity">
    <reaction evidence="7">
        <text>D-glyceraldehyde 3-phosphate + phosphate + NAD(+) = (2R)-3-phospho-glyceroyl phosphate + NADH + H(+)</text>
        <dbReference type="Rhea" id="RHEA:10300"/>
        <dbReference type="ChEBI" id="CHEBI:15378"/>
        <dbReference type="ChEBI" id="CHEBI:43474"/>
        <dbReference type="ChEBI" id="CHEBI:57540"/>
        <dbReference type="ChEBI" id="CHEBI:57604"/>
        <dbReference type="ChEBI" id="CHEBI:57945"/>
        <dbReference type="ChEBI" id="CHEBI:59776"/>
        <dbReference type="EC" id="1.2.1.12"/>
    </reaction>
</comment>
<comment type="biophysicochemical properties">
    <kinetics>
        <KM evidence="7">15 uM for BPG</KM>
        <KM evidence="7">42 uM for NAD</KM>
        <KM evidence="7">1500 uM for G3P</KM>
        <text>kcat is 1056 sec(-1) for dehydrogenase activity.</text>
    </kinetics>
</comment>
<comment type="pathway">
    <text evidence="13">Carbohydrate degradation; glycolysis; pyruvate from D-glyceraldehyde 3-phosphate: step 1/5.</text>
</comment>
<comment type="subunit">
    <text evidence="2 4 8">Homotetramer.</text>
</comment>
<comment type="interaction">
    <interactant intactId="EBI-368904">
        <id>P0A9B2</id>
    </interactant>
    <interactant intactId="EBI-546726">
        <id>P0A9H9</id>
        <label>cheZ</label>
    </interactant>
    <organismsDiffer>false</organismsDiffer>
    <experiments>2</experiments>
</comment>
<comment type="interaction">
    <interactant intactId="EBI-368904">
        <id>P0A9B2</id>
    </interactant>
    <interactant intactId="EBI-368904">
        <id>P0A9B2</id>
        <label>gapA</label>
    </interactant>
    <organismsDiffer>false</organismsDiffer>
    <experiments>2</experiments>
</comment>
<comment type="subcellular location">
    <subcellularLocation>
        <location evidence="13">Cytoplasm</location>
    </subcellularLocation>
</comment>
<comment type="similarity">
    <text evidence="13">Belongs to the glyceraldehyde-3-phosphate dehydrogenase family.</text>
</comment>
<feature type="initiator methionine" description="Removed" evidence="9 11">
    <location>
        <position position="1"/>
    </location>
</feature>
<feature type="chain" id="PRO_0000145648" description="Glyceraldehyde-3-phosphate dehydrogenase A">
    <location>
        <begin position="2"/>
        <end position="331"/>
    </location>
</feature>
<feature type="active site" description="Nucleophile" evidence="14">
    <location>
        <position position="150"/>
    </location>
</feature>
<feature type="binding site" evidence="2 4 8 10">
    <location>
        <begin position="12"/>
        <end position="13"/>
    </location>
    <ligand>
        <name>NAD(+)</name>
        <dbReference type="ChEBI" id="CHEBI:57540"/>
    </ligand>
</feature>
<feature type="binding site" evidence="2 4 8">
    <location>
        <position position="34"/>
    </location>
    <ligand>
        <name>NAD(+)</name>
        <dbReference type="ChEBI" id="CHEBI:57540"/>
    </ligand>
</feature>
<feature type="binding site" evidence="2 4">
    <location>
        <position position="78"/>
    </location>
    <ligand>
        <name>NAD(+)</name>
        <dbReference type="ChEBI" id="CHEBI:57540"/>
    </ligand>
</feature>
<feature type="binding site" evidence="4">
    <location>
        <position position="120"/>
    </location>
    <ligand>
        <name>NAD(+)</name>
        <dbReference type="ChEBI" id="CHEBI:57540"/>
    </ligand>
</feature>
<feature type="binding site" evidence="2">
    <location>
        <begin position="149"/>
        <end position="151"/>
    </location>
    <ligand>
        <name>D-glyceraldehyde 3-phosphate</name>
        <dbReference type="ChEBI" id="CHEBI:59776"/>
    </ligand>
</feature>
<feature type="binding site" evidence="1">
    <location>
        <position position="180"/>
    </location>
    <ligand>
        <name>D-glyceraldehyde 3-phosphate</name>
        <dbReference type="ChEBI" id="CHEBI:59776"/>
    </ligand>
</feature>
<feature type="binding site" evidence="2">
    <location>
        <begin position="209"/>
        <end position="210"/>
    </location>
    <ligand>
        <name>D-glyceraldehyde 3-phosphate</name>
        <dbReference type="ChEBI" id="CHEBI:59776"/>
    </ligand>
</feature>
<feature type="binding site" evidence="4 10 14">
    <location>
        <position position="232"/>
    </location>
    <ligand>
        <name>D-glyceraldehyde 3-phosphate</name>
        <dbReference type="ChEBI" id="CHEBI:59776"/>
    </ligand>
</feature>
<feature type="binding site" evidence="2 4 8">
    <location>
        <position position="314"/>
    </location>
    <ligand>
        <name>NAD(+)</name>
        <dbReference type="ChEBI" id="CHEBI:57540"/>
    </ligand>
</feature>
<feature type="site" description="Activates thiol group during catalysis" evidence="7">
    <location>
        <position position="177"/>
    </location>
</feature>
<feature type="modified residue" description="N6-succinyllysine" evidence="5">
    <location>
        <position position="115"/>
    </location>
</feature>
<feature type="modified residue" description="N6-succinyllysine" evidence="5">
    <location>
        <position position="124"/>
    </location>
</feature>
<feature type="modified residue" description="N6-acetyllysine; alternate" evidence="3">
    <location>
        <position position="132"/>
    </location>
</feature>
<feature type="modified residue" description="N6-succinyllysine; alternate" evidence="5">
    <location>
        <position position="132"/>
    </location>
</feature>
<feature type="modified residue" description="N6-acetyllysine" evidence="3">
    <location>
        <position position="138"/>
    </location>
</feature>
<feature type="modified residue" description="N6-acetyllysine; alternate" evidence="3">
    <location>
        <position position="192"/>
    </location>
</feature>
<feature type="modified residue" description="N6-succinyllysine; alternate" evidence="5">
    <location>
        <position position="192"/>
    </location>
</feature>
<feature type="modified residue" description="N6-succinyllysine" evidence="5">
    <location>
        <position position="213"/>
    </location>
</feature>
<feature type="modified residue" description="N6-succinyllysine" evidence="5">
    <location>
        <position position="217"/>
    </location>
</feature>
<feature type="modified residue" description="N6-succinyllysine" evidence="5">
    <location>
        <position position="225"/>
    </location>
</feature>
<feature type="modified residue" description="N6-acetyllysine" evidence="3">
    <location>
        <position position="249"/>
    </location>
</feature>
<feature type="modified residue" description="N6-succinyllysine" evidence="5">
    <location>
        <position position="249"/>
    </location>
</feature>
<feature type="modified residue" description="N6-succinyllysine" evidence="5">
    <location>
        <position position="257"/>
    </location>
</feature>
<feature type="modified residue" description="N6-succinyllysine" evidence="5">
    <location>
        <position position="261"/>
    </location>
</feature>
<feature type="modified residue" description="N6-malonyllysine; alternate" evidence="6">
    <location>
        <position position="331"/>
    </location>
</feature>
<feature type="modified residue" description="N6-succinyllysine; alternate" evidence="5">
    <location>
        <position position="331"/>
    </location>
</feature>
<feature type="sequence variant" description="In strain: ECOR 70.">
    <original>Y</original>
    <variation>I</variation>
    <location>
        <position position="43"/>
    </location>
</feature>
<feature type="sequence variant" description="In strain: E830587.">
    <original>G</original>
    <variation>D</variation>
    <location>
        <position position="266"/>
    </location>
</feature>
<feature type="sequence variant" description="In strain: E2666-74.">
    <original>E</original>
    <variation>A</variation>
    <location>
        <position position="267"/>
    </location>
</feature>
<feature type="mutagenesis site" description="Reduces activity about 50-fold." evidence="7">
    <original>H</original>
    <variation>N</variation>
    <location>
        <position position="177"/>
    </location>
</feature>
<feature type="strand" evidence="15">
    <location>
        <begin position="3"/>
        <end position="8"/>
    </location>
</feature>
<feature type="helix" evidence="15">
    <location>
        <begin position="12"/>
        <end position="22"/>
    </location>
</feature>
<feature type="strand" evidence="15">
    <location>
        <begin position="25"/>
        <end position="33"/>
    </location>
</feature>
<feature type="helix" evidence="15">
    <location>
        <begin position="38"/>
        <end position="46"/>
    </location>
</feature>
<feature type="turn" evidence="15">
    <location>
        <begin position="49"/>
        <end position="51"/>
    </location>
</feature>
<feature type="strand" evidence="15">
    <location>
        <begin position="58"/>
        <end position="61"/>
    </location>
</feature>
<feature type="strand" evidence="15">
    <location>
        <begin position="64"/>
        <end position="67"/>
    </location>
</feature>
<feature type="strand" evidence="15">
    <location>
        <begin position="70"/>
        <end position="75"/>
    </location>
</feature>
<feature type="helix" evidence="15">
    <location>
        <begin position="80"/>
        <end position="82"/>
    </location>
</feature>
<feature type="helix" evidence="15">
    <location>
        <begin position="85"/>
        <end position="88"/>
    </location>
</feature>
<feature type="strand" evidence="15">
    <location>
        <begin position="92"/>
        <end position="95"/>
    </location>
</feature>
<feature type="strand" evidence="15">
    <location>
        <begin position="97"/>
        <end position="99"/>
    </location>
</feature>
<feature type="helix" evidence="15">
    <location>
        <begin position="103"/>
        <end position="106"/>
    </location>
</feature>
<feature type="helix" evidence="15">
    <location>
        <begin position="108"/>
        <end position="111"/>
    </location>
</feature>
<feature type="strand" evidence="15">
    <location>
        <begin position="115"/>
        <end position="121"/>
    </location>
</feature>
<feature type="strand" evidence="15">
    <location>
        <begin position="124"/>
        <end position="126"/>
    </location>
</feature>
<feature type="turn" evidence="15">
    <location>
        <begin position="132"/>
        <end position="134"/>
    </location>
</feature>
<feature type="helix" evidence="15">
    <location>
        <begin position="136"/>
        <end position="138"/>
    </location>
</feature>
<feature type="strand" evidence="15">
    <location>
        <begin position="143"/>
        <end position="146"/>
    </location>
</feature>
<feature type="helix" evidence="15">
    <location>
        <begin position="150"/>
        <end position="166"/>
    </location>
</feature>
<feature type="strand" evidence="15">
    <location>
        <begin position="168"/>
        <end position="178"/>
    </location>
</feature>
<feature type="strand" evidence="15">
    <location>
        <begin position="183"/>
        <end position="187"/>
    </location>
</feature>
<feature type="helix" evidence="15">
    <location>
        <begin position="195"/>
        <end position="197"/>
    </location>
</feature>
<feature type="helix" evidence="15">
    <location>
        <begin position="200"/>
        <end position="202"/>
    </location>
</feature>
<feature type="strand" evidence="15">
    <location>
        <begin position="205"/>
        <end position="207"/>
    </location>
</feature>
<feature type="helix" evidence="15">
    <location>
        <begin position="211"/>
        <end position="218"/>
    </location>
</feature>
<feature type="helix" evidence="15">
    <location>
        <begin position="220"/>
        <end position="222"/>
    </location>
</feature>
<feature type="turn" evidence="15">
    <location>
        <begin position="223"/>
        <end position="225"/>
    </location>
</feature>
<feature type="strand" evidence="15">
    <location>
        <begin position="226"/>
        <end position="234"/>
    </location>
</feature>
<feature type="strand" evidence="15">
    <location>
        <begin position="239"/>
        <end position="249"/>
    </location>
</feature>
<feature type="helix" evidence="15">
    <location>
        <begin position="253"/>
        <end position="265"/>
    </location>
</feature>
<feature type="turn" evidence="15">
    <location>
        <begin position="266"/>
        <end position="271"/>
    </location>
</feature>
<feature type="strand" evidence="15">
    <location>
        <begin position="272"/>
        <end position="275"/>
    </location>
</feature>
<feature type="helix" evidence="15">
    <location>
        <begin position="281"/>
        <end position="284"/>
    </location>
</feature>
<feature type="strand" evidence="15">
    <location>
        <begin position="289"/>
        <end position="294"/>
    </location>
</feature>
<feature type="turn" evidence="15">
    <location>
        <begin position="295"/>
        <end position="297"/>
    </location>
</feature>
<feature type="strand" evidence="15">
    <location>
        <begin position="299"/>
        <end position="302"/>
    </location>
</feature>
<feature type="strand" evidence="15">
    <location>
        <begin position="305"/>
        <end position="312"/>
    </location>
</feature>
<feature type="helix" evidence="15">
    <location>
        <begin position="316"/>
        <end position="330"/>
    </location>
</feature>
<name>G3P1_ECOLI</name>
<sequence>MTIKVGINGFGRIGRIVFRAAQKRSDIEIVAINDLLDADYMAYMLKYDSTHGRFDGTVEVKDGHLIVNGKKIRVTAERDPANLKWDEVGVDVVAEATGLFLTDETARKHITAGAKKVVMTGPSKDNTPMFVKGANFDKYAGQDIVSNASCTTNCLAPLAKVINDNFGIIEGLMTTVHATTATQKTVDGPSHKDWRGGRGASQNIIPSSTGAAKAVGKVLPELNGKLTGMAFRVPTPNVSVVDLTVRLEKAATYEQIKAAVKAAAEGEMKGVLGYTEDDVVSTDFNGEVCTSVFDAKAGIALNDNFVKLVSWYDNETGYSNKVLDLIAHISK</sequence>
<accession>P0A9B2</accession>
<accession>P06977</accession>
<reference key="1">
    <citation type="journal article" date="1985" name="Eur. J. Biochem.">
        <title>Nucleotide sequence of the Escherichia coli gap gene. Different evolutionary behavior of the NAD+-binding domain and of the catalytic domain of D-glyceraldehyde-3-phosphate dehydrogenase.</title>
        <authorList>
            <person name="Branlant G."/>
            <person name="Branlant C."/>
        </authorList>
    </citation>
    <scope>NUCLEOTIDE SEQUENCE [GENOMIC DNA]</scope>
</reference>
<reference key="2">
    <citation type="submission" date="1990-09" db="EMBL/GenBank/DDBJ databases">
        <authorList>
            <person name="Nelson K."/>
        </authorList>
    </citation>
    <scope>SEQUENCE REVISION TO 295-300</scope>
</reference>
<reference key="3">
    <citation type="journal article" date="1996" name="DNA Res.">
        <title>A 570-kb DNA sequence of the Escherichia coli K-12 genome corresponding to the 28.0-40.1 min region on the linkage map.</title>
        <authorList>
            <person name="Aiba H."/>
            <person name="Baba T."/>
            <person name="Fujita K."/>
            <person name="Hayashi K."/>
            <person name="Inada T."/>
            <person name="Isono K."/>
            <person name="Itoh T."/>
            <person name="Kasai H."/>
            <person name="Kashimoto K."/>
            <person name="Kimura S."/>
            <person name="Kitakawa M."/>
            <person name="Kitagawa M."/>
            <person name="Makino K."/>
            <person name="Miki T."/>
            <person name="Mizobuchi K."/>
            <person name="Mori H."/>
            <person name="Mori T."/>
            <person name="Motomura K."/>
            <person name="Nakade S."/>
            <person name="Nakamura Y."/>
            <person name="Nashimoto H."/>
            <person name="Nishio Y."/>
            <person name="Oshima T."/>
            <person name="Saito N."/>
            <person name="Sampei G."/>
            <person name="Seki Y."/>
            <person name="Sivasundaram S."/>
            <person name="Tagami H."/>
            <person name="Takeda J."/>
            <person name="Takemoto K."/>
            <person name="Takeuchi Y."/>
            <person name="Wada C."/>
            <person name="Yamamoto Y."/>
            <person name="Horiuchi T."/>
        </authorList>
    </citation>
    <scope>NUCLEOTIDE SEQUENCE [LARGE SCALE GENOMIC DNA]</scope>
    <source>
        <strain>K12 / W3110 / ATCC 27325 / DSM 5911</strain>
    </source>
</reference>
<reference key="4">
    <citation type="journal article" date="1997" name="Science">
        <title>The complete genome sequence of Escherichia coli K-12.</title>
        <authorList>
            <person name="Blattner F.R."/>
            <person name="Plunkett G. III"/>
            <person name="Bloch C.A."/>
            <person name="Perna N.T."/>
            <person name="Burland V."/>
            <person name="Riley M."/>
            <person name="Collado-Vides J."/>
            <person name="Glasner J.D."/>
            <person name="Rode C.K."/>
            <person name="Mayhew G.F."/>
            <person name="Gregor J."/>
            <person name="Davis N.W."/>
            <person name="Kirkpatrick H.A."/>
            <person name="Goeden M.A."/>
            <person name="Rose D.J."/>
            <person name="Mau B."/>
            <person name="Shao Y."/>
        </authorList>
    </citation>
    <scope>NUCLEOTIDE SEQUENCE [LARGE SCALE GENOMIC DNA]</scope>
    <source>
        <strain>K12 / MG1655 / ATCC 47076</strain>
    </source>
</reference>
<reference key="5">
    <citation type="journal article" date="2006" name="Mol. Syst. Biol.">
        <title>Highly accurate genome sequences of Escherichia coli K-12 strains MG1655 and W3110.</title>
        <authorList>
            <person name="Hayashi K."/>
            <person name="Morooka N."/>
            <person name="Yamamoto Y."/>
            <person name="Fujita K."/>
            <person name="Isono K."/>
            <person name="Choi S."/>
            <person name="Ohtsubo E."/>
            <person name="Baba T."/>
            <person name="Wanner B.L."/>
            <person name="Mori H."/>
            <person name="Horiuchi T."/>
        </authorList>
    </citation>
    <scope>NUCLEOTIDE SEQUENCE [LARGE SCALE GENOMIC DNA]</scope>
    <source>
        <strain>K12 / W3110 / ATCC 27325 / DSM 5911</strain>
    </source>
</reference>
<reference key="6">
    <citation type="submission" date="1994-09" db="UniProtKB">
        <authorList>
            <person name="Pasquali C."/>
            <person name="Sanchez J.-C."/>
            <person name="Ravier F."/>
            <person name="Golaz O."/>
            <person name="Hughes G.J."/>
            <person name="Frutiger S."/>
            <person name="Paquet N."/>
            <person name="Wilkins M."/>
            <person name="Appel R.D."/>
            <person name="Bairoch A."/>
            <person name="Hochstrasser D.F."/>
        </authorList>
    </citation>
    <scope>PROTEIN SEQUENCE OF 2-13</scope>
    <source>
        <strain>K12 / W3110 / ATCC 27325 / DSM 5911</strain>
    </source>
</reference>
<reference key="7">
    <citation type="journal article" date="1997" name="Electrophoresis">
        <title>Comparing the predicted and observed properties of proteins encoded in the genome of Escherichia coli K-12.</title>
        <authorList>
            <person name="Link A.J."/>
            <person name="Robison K."/>
            <person name="Church G.M."/>
        </authorList>
    </citation>
    <scope>PROTEIN SEQUENCE OF 2-13</scope>
    <source>
        <strain>K12 / EMG2</strain>
    </source>
</reference>
<reference key="8">
    <citation type="journal article" date="1991" name="Proc. Natl. Acad. Sci. U.S.A.">
        <title>Nucleotide polymorphism and evolution in the glyceraldehyde-3-phosphate dehydrogenase gene (gapA) in natural populations of Salmonella and Escherichia coli.</title>
        <authorList>
            <person name="Nelson K."/>
            <person name="Whittam T.S."/>
            <person name="Selander R.K."/>
        </authorList>
    </citation>
    <scope>NUCLEOTIDE SEQUENCE [GENOMIC DNA] OF 7-314</scope>
    <source>
        <strain>A8190</strain>
        <strain>E2666-74</strain>
        <strain>E3406</strain>
        <strain>E830587</strain>
        <strain>E851819</strain>
        <strain>ECOR 14</strain>
        <strain>ECOR 32</strain>
        <strain>ECOR 40</strain>
        <strain>ECOR 52</strain>
        <strain>ECOR 58</strain>
        <strain>ECOR 64</strain>
        <strain>ECOR 70</strain>
    </source>
</reference>
<reference key="9">
    <citation type="journal article" date="1994" name="Genetics">
        <title>Detecting selective sweeps in naturally occurring Escherichia coli.</title>
        <authorList>
            <person name="Guttman D.S."/>
            <person name="Dykhuizen D.E."/>
        </authorList>
    </citation>
    <scope>NUCLEOTIDE SEQUENCE [GENOMIC DNA] OF 10-321</scope>
    <source>
        <strain>ECOR 10</strain>
        <strain>ECOR 16</strain>
        <strain>ECOR 38</strain>
        <strain>ECOR 39</strain>
        <strain>ECOR 4</strain>
        <strain>ECOR 40</strain>
        <strain>ECOR 49</strain>
        <strain>ECOR 65</strain>
        <strain>ECOR 68</strain>
        <strain>ECOR 8</strain>
        <strain>O2:HN / ECOR 50 / P97 / UPEC</strain>
    </source>
</reference>
<reference key="10">
    <citation type="journal article" date="1990" name="J. Mol. Evol.">
        <title>A naturally occurring horizontal gene transfer from a eukaryote to a prokaryote.</title>
        <authorList>
            <person name="Doolittle R.F."/>
            <person name="Feng D.F."/>
            <person name="Anderson K.L."/>
            <person name="Alberro M.R."/>
        </authorList>
    </citation>
    <scope>GENE TRANSFER DISCUSSION</scope>
</reference>
<reference key="11">
    <citation type="journal article" date="1989" name="Biochemistry">
        <title>Role of the histidine 176 residue in glyceraldehyde-3-phosphate dehydrogenase as probed by site-directed mutagenesis.</title>
        <authorList>
            <person name="Soukri A."/>
            <person name="Mougin A."/>
            <person name="Corbier C."/>
            <person name="Wonacott A."/>
            <person name="Branlant C."/>
            <person name="Branlant G."/>
        </authorList>
    </citation>
    <scope>FUNCTION</scope>
    <scope>CATALYTIC ACTIVITY</scope>
    <scope>BIOPHYSICOCHEMICAL PROPERTIES</scope>
    <scope>MUTAGENESIS OF HIS-177</scope>
</reference>
<reference key="12">
    <citation type="journal article" date="1997" name="Electrophoresis">
        <title>Escherichia coli proteome analysis using the gene-protein database.</title>
        <authorList>
            <person name="VanBogelen R.A."/>
            <person name="Abshire K.Z."/>
            <person name="Moldover B."/>
            <person name="Olson E.R."/>
            <person name="Neidhardt F.C."/>
        </authorList>
    </citation>
    <scope>IDENTIFICATION BY 2D-GEL</scope>
</reference>
<reference key="13">
    <citation type="journal article" date="2009" name="Mol. Cell. Proteomics">
        <title>Lysine acetylation is a highly abundant and evolutionarily conserved modification in Escherichia coli.</title>
        <authorList>
            <person name="Zhang J."/>
            <person name="Sprung R."/>
            <person name="Pei J."/>
            <person name="Tan X."/>
            <person name="Kim S."/>
            <person name="Zhu H."/>
            <person name="Liu C.F."/>
            <person name="Grishin N.V."/>
            <person name="Zhao Y."/>
        </authorList>
    </citation>
    <scope>ACETYLATION [LARGE SCALE ANALYSIS] AT LYS-132; LYS-138; LYS-192 AND LYS-249</scope>
    <scope>IDENTIFICATION BY MASS SPECTROMETRY</scope>
    <source>
        <strain>K12 / JW1106</strain>
        <strain>K12 / MG1655 / ATCC 47076</strain>
    </source>
</reference>
<reference key="14">
    <citation type="journal article" date="2011" name="Mol. Cell. Proteomics">
        <title>The first identification of lysine malonylation substrates and its regulatory enzyme.</title>
        <authorList>
            <person name="Peng C."/>
            <person name="Lu Z."/>
            <person name="Xie Z."/>
            <person name="Cheng Z."/>
            <person name="Chen Y."/>
            <person name="Tan M."/>
            <person name="Luo H."/>
            <person name="Zhang Y."/>
            <person name="He W."/>
            <person name="Yang K."/>
            <person name="Zwaans B.M."/>
            <person name="Tishkoff D."/>
            <person name="Ho L."/>
            <person name="Lombard D."/>
            <person name="He T.C."/>
            <person name="Dai J."/>
            <person name="Verdin E."/>
            <person name="Ye Y."/>
            <person name="Zhao Y."/>
        </authorList>
    </citation>
    <scope>MALONYLATION AT LYS-331</scope>
    <source>
        <strain>K12</strain>
    </source>
</reference>
<reference key="15">
    <citation type="journal article" date="2011" name="Nat. Chem. Biol.">
        <title>Identification of lysine succinylation as a new post-translational modification.</title>
        <authorList>
            <person name="Zhang Z."/>
            <person name="Tan M."/>
            <person name="Xie Z."/>
            <person name="Dai L."/>
            <person name="Chen Y."/>
            <person name="Zhao Y."/>
        </authorList>
    </citation>
    <scope>SUCCINYLATION AT LYS-115; LYS-124; LYS-132; LYS-192; LYS-213; LYS-217; LYS-225; LYS-249; LYS-257; LYS-261 AND LYS-331</scope>
    <source>
        <strain>K12</strain>
    </source>
</reference>
<reference key="16">
    <citation type="journal article" date="1996" name="J. Mol. Biol.">
        <title>Comparison of the structures of wild-type and a N313T mutant of Escherichia coli glyceraldehyde 3-phosphate dehydrogenases: implication for NAD binding and cooperativity.</title>
        <authorList>
            <person name="Duee E."/>
            <person name="Olivier-Deyris L."/>
            <person name="Fanchon E."/>
            <person name="Corbier C."/>
            <person name="Branlant G."/>
            <person name="Dideberg O."/>
        </authorList>
    </citation>
    <scope>X-RAY CRYSTALLOGRAPHY (1.8 ANGSTROMS) OF WILD-TYPE AND THR-313 MUTANT IN COMPLEX WITH NAD</scope>
    <scope>SUBUNIT</scope>
</reference>
<reference key="17">
    <citation type="journal article" date="2000" name="Biochemistry">
        <title>Structural analysis of glyceraldehyde 3-phosphate dehydrogenase from Escherichia coli: direct evidence of substrate binding and cofactor-induced conformational changes.</title>
        <authorList>
            <person name="Yun M."/>
            <person name="Park C.-G."/>
            <person name="Kim J.-Y."/>
            <person name="Park H.-W."/>
        </authorList>
    </citation>
    <scope>X-RAY CRYSTALLOGRAPHY (2.0 ANGSTROMS) IN COMPLEX WITH NAD AND GLYCERALDEHYDE 3-PHOSPHATE</scope>
    <scope>SUBUNIT</scope>
</reference>
<reference key="18">
    <citation type="submission" date="2004-01" db="PDB data bank">
        <title>Crystal structure of MES buffer bound form of glyceraldehyde 3-phosphate dehydrogenase from Escherichia coli.</title>
        <authorList>
            <person name="Shin D.H."/>
            <person name="Thor J."/>
            <person name="Yokota H."/>
            <person name="Kim R."/>
            <person name="Kim S.H."/>
        </authorList>
    </citation>
    <scope>X-RAY CRYSTALLOGRAPHY (2.04 ANGSTROMS) IN COMPLEX WITH SUBSTRATE ANALOG</scope>
</reference>
<reference key="19">
    <citation type="journal article" date="2009" name="J. Biol. Chem.">
        <title>Structure of insoluble rat sperm glyceraldehyde-3-phosphate dehydrogenase (GAPDH) via heterotetramer formation with Escherichia coli GAPDH reveals target for contraceptive design.</title>
        <authorList>
            <person name="Frayne J."/>
            <person name="Taylor A."/>
            <person name="Cameron G."/>
            <person name="Hadfield A.T."/>
        </authorList>
    </citation>
    <scope>X-RAY CRYSTALLOGRAPHY (2.20 ANGSTROMS) IN COMPLEX WITH NAD AND SUBSTRATE ANALOG</scope>
    <scope>SUBUNIT</scope>
</reference>
<evidence type="ECO:0000250" key="1">
    <source>
        <dbReference type="UniProtKB" id="P00362"/>
    </source>
</evidence>
<evidence type="ECO:0000269" key="2">
    <source>
    </source>
</evidence>
<evidence type="ECO:0000269" key="3">
    <source>
    </source>
</evidence>
<evidence type="ECO:0000269" key="4">
    <source>
    </source>
</evidence>
<evidence type="ECO:0000269" key="5">
    <source>
    </source>
</evidence>
<evidence type="ECO:0000269" key="6">
    <source>
    </source>
</evidence>
<evidence type="ECO:0000269" key="7">
    <source>
    </source>
</evidence>
<evidence type="ECO:0000269" key="8">
    <source>
    </source>
</evidence>
<evidence type="ECO:0000269" key="9">
    <source>
    </source>
</evidence>
<evidence type="ECO:0000269" key="10">
    <source ref="18"/>
</evidence>
<evidence type="ECO:0000269" key="11">
    <source ref="6"/>
</evidence>
<evidence type="ECO:0000303" key="12">
    <source>
    </source>
</evidence>
<evidence type="ECO:0000305" key="13"/>
<evidence type="ECO:0000305" key="14">
    <source>
    </source>
</evidence>
<evidence type="ECO:0007829" key="15">
    <source>
        <dbReference type="PDB" id="6UTO"/>
    </source>
</evidence>
<gene>
    <name evidence="12" type="primary">gapA</name>
    <name type="ordered locus">b1779</name>
    <name type="ordered locus">JW1768</name>
</gene>
<proteinExistence type="evidence at protein level"/>
<protein>
    <recommendedName>
        <fullName evidence="12">Glyceraldehyde-3-phosphate dehydrogenase A</fullName>
        <shortName evidence="12">GAPDH-A</shortName>
        <ecNumber evidence="7">1.2.1.12</ecNumber>
    </recommendedName>
    <alternativeName>
        <fullName evidence="12">NAD-dependent glyceraldehyde-3-phosphate dehydrogenase</fullName>
    </alternativeName>
</protein>
<organism>
    <name type="scientific">Escherichia coli (strain K12)</name>
    <dbReference type="NCBI Taxonomy" id="83333"/>
    <lineage>
        <taxon>Bacteria</taxon>
        <taxon>Pseudomonadati</taxon>
        <taxon>Pseudomonadota</taxon>
        <taxon>Gammaproteobacteria</taxon>
        <taxon>Enterobacterales</taxon>
        <taxon>Enterobacteriaceae</taxon>
        <taxon>Escherichia</taxon>
    </lineage>
</organism>